<protein>
    <recommendedName>
        <fullName>Archaeal histone A2</fullName>
    </recommendedName>
</protein>
<accession>P48783</accession>
<name>HFO2_METFO</name>
<reference key="1">
    <citation type="journal article" date="1995" name="J. Bacteriol.">
        <title>Methanobacterium formicicum, a mesophilic methanogen, contains three HFo histones.</title>
        <authorList>
            <person name="Darcy T.J."/>
            <person name="Sandman K.M."/>
            <person name="Reeve J.N."/>
        </authorList>
    </citation>
    <scope>NUCLEOTIDE SEQUENCE [GENOMIC DNA]</scope>
    <scope>PARTIAL PROTEIN SEQUENCE</scope>
    <scope>FUNCTION</scope>
    <scope>SUBUNIT</scope>
    <source>
        <strain>JF-1</strain>
    </source>
</reference>
<dbReference type="EMBL" id="U12931">
    <property type="protein sequence ID" value="AAA67722.1"/>
    <property type="molecule type" value="Genomic_DNA"/>
</dbReference>
<dbReference type="RefSeq" id="WP_004031856.1">
    <property type="nucleotide sequence ID" value="NZ_LN734822.1"/>
</dbReference>
<dbReference type="SMR" id="P48783"/>
<dbReference type="STRING" id="2162.BRM9_1489"/>
<dbReference type="GeneID" id="82849299"/>
<dbReference type="GO" id="GO:0005694">
    <property type="term" value="C:chromosome"/>
    <property type="evidence" value="ECO:0007669"/>
    <property type="project" value="UniProtKB-SubCell"/>
</dbReference>
<dbReference type="GO" id="GO:0005737">
    <property type="term" value="C:cytoplasm"/>
    <property type="evidence" value="ECO:0007669"/>
    <property type="project" value="UniProtKB-SubCell"/>
</dbReference>
<dbReference type="GO" id="GO:0003677">
    <property type="term" value="F:DNA binding"/>
    <property type="evidence" value="ECO:0007669"/>
    <property type="project" value="UniProtKB-KW"/>
</dbReference>
<dbReference type="GO" id="GO:0046982">
    <property type="term" value="F:protein heterodimerization activity"/>
    <property type="evidence" value="ECO:0007669"/>
    <property type="project" value="InterPro"/>
</dbReference>
<dbReference type="CDD" id="cd22909">
    <property type="entry name" value="HFD_archaea_histone-like"/>
    <property type="match status" value="1"/>
</dbReference>
<dbReference type="Gene3D" id="1.10.20.10">
    <property type="entry name" value="Histone, subunit A"/>
    <property type="match status" value="1"/>
</dbReference>
<dbReference type="InterPro" id="IPR050947">
    <property type="entry name" value="Archaeal_histone_HMF"/>
</dbReference>
<dbReference type="InterPro" id="IPR003958">
    <property type="entry name" value="CBFA_NFYB_domain"/>
</dbReference>
<dbReference type="InterPro" id="IPR009072">
    <property type="entry name" value="Histone-fold"/>
</dbReference>
<dbReference type="InterPro" id="IPR050004">
    <property type="entry name" value="HmfB-like"/>
</dbReference>
<dbReference type="NCBIfam" id="NF043032">
    <property type="entry name" value="archaea_histone"/>
    <property type="match status" value="1"/>
</dbReference>
<dbReference type="PANTHER" id="PTHR47828">
    <property type="entry name" value="ARCHAEAL HISTONE A"/>
    <property type="match status" value="1"/>
</dbReference>
<dbReference type="PANTHER" id="PTHR47828:SF1">
    <property type="entry name" value="ARCHAEAL HISTONE A"/>
    <property type="match status" value="1"/>
</dbReference>
<dbReference type="Pfam" id="PF00808">
    <property type="entry name" value="CBFD_NFYB_HMF"/>
    <property type="match status" value="1"/>
</dbReference>
<dbReference type="SUPFAM" id="SSF47113">
    <property type="entry name" value="Histone-fold"/>
    <property type="match status" value="1"/>
</dbReference>
<feature type="initiator methionine" description="Removed">
    <location>
        <position position="1"/>
    </location>
</feature>
<feature type="chain" id="PRO_0000154985" description="Archaeal histone A2">
    <location>
        <begin position="2"/>
        <end position="68"/>
    </location>
</feature>
<feature type="region of interest" description="Interaction with DNA" evidence="1">
    <location>
        <begin position="20"/>
        <end position="22"/>
    </location>
</feature>
<feature type="region of interest" description="Interaction with DNA" evidence="1">
    <location>
        <begin position="54"/>
        <end position="57"/>
    </location>
</feature>
<feature type="site" description="Interaction with DNA" evidence="1">
    <location>
        <position position="14"/>
    </location>
</feature>
<proteinExistence type="evidence at protein level"/>
<sequence length="68" mass="7195">MAELPIAPVGRIIKNAGAQRISDDAKEALAKALEENGEELAKKAVELAKHAGRKTVKAEDIEMAVKSA</sequence>
<keyword id="KW-0158">Chromosome</keyword>
<keyword id="KW-0963">Cytoplasm</keyword>
<keyword id="KW-0903">Direct protein sequencing</keyword>
<keyword id="KW-0238">DNA-binding</keyword>
<gene>
    <name type="primary">hfoA2</name>
</gene>
<organism>
    <name type="scientific">Methanobacterium formicicum</name>
    <dbReference type="NCBI Taxonomy" id="2162"/>
    <lineage>
        <taxon>Archaea</taxon>
        <taxon>Methanobacteriati</taxon>
        <taxon>Methanobacteriota</taxon>
        <taxon>Methanomada group</taxon>
        <taxon>Methanobacteria</taxon>
        <taxon>Methanobacteriales</taxon>
        <taxon>Methanobacteriaceae</taxon>
        <taxon>Methanobacterium</taxon>
    </lineage>
</organism>
<comment type="function">
    <text evidence="3">Binds and compact DNA (95 to 150 base pairs) to form nucleosome-like structures that contain positive DNA supercoils. Increases the resistance of DNA to thermal denaturation (in vitro).</text>
</comment>
<comment type="subunit">
    <text evidence="1 3">Homodimer or heterodimer with another histone (PubMed:7836329). Dimers then assemble into higher oligomers, with the DNA wrapped around the protein core (By similarity).</text>
</comment>
<comment type="subcellular location">
    <subcellularLocation>
        <location evidence="2">Cytoplasm</location>
    </subcellularLocation>
    <subcellularLocation>
        <location evidence="2">Chromosome</location>
    </subcellularLocation>
</comment>
<comment type="similarity">
    <text evidence="2">Belongs to the archaeal histone HMF family.</text>
</comment>
<evidence type="ECO:0000250" key="1">
    <source>
        <dbReference type="UniProtKB" id="P19267"/>
    </source>
</evidence>
<evidence type="ECO:0000305" key="2"/>
<evidence type="ECO:0000305" key="3">
    <source>
    </source>
</evidence>